<gene>
    <name evidence="1" type="primary">rpmJ</name>
    <name type="ordered locus">Mpop_2863</name>
</gene>
<evidence type="ECO:0000255" key="1">
    <source>
        <dbReference type="HAMAP-Rule" id="MF_00251"/>
    </source>
</evidence>
<evidence type="ECO:0000305" key="2"/>
<protein>
    <recommendedName>
        <fullName evidence="1">Large ribosomal subunit protein bL36</fullName>
    </recommendedName>
    <alternativeName>
        <fullName evidence="2">50S ribosomal protein L36</fullName>
    </alternativeName>
</protein>
<sequence>MKIRNSLKSLRGRHRDNQLVRRKGRVYVINKTQKRFKARQG</sequence>
<reference key="1">
    <citation type="submission" date="2008-04" db="EMBL/GenBank/DDBJ databases">
        <title>Complete sequence of chromosome of Methylobacterium populi BJ001.</title>
        <authorList>
            <consortium name="US DOE Joint Genome Institute"/>
            <person name="Copeland A."/>
            <person name="Lucas S."/>
            <person name="Lapidus A."/>
            <person name="Glavina del Rio T."/>
            <person name="Dalin E."/>
            <person name="Tice H."/>
            <person name="Bruce D."/>
            <person name="Goodwin L."/>
            <person name="Pitluck S."/>
            <person name="Chertkov O."/>
            <person name="Brettin T."/>
            <person name="Detter J.C."/>
            <person name="Han C."/>
            <person name="Kuske C.R."/>
            <person name="Schmutz J."/>
            <person name="Larimer F."/>
            <person name="Land M."/>
            <person name="Hauser L."/>
            <person name="Kyrpides N."/>
            <person name="Mikhailova N."/>
            <person name="Marx C."/>
            <person name="Richardson P."/>
        </authorList>
    </citation>
    <scope>NUCLEOTIDE SEQUENCE [LARGE SCALE GENOMIC DNA]</scope>
    <source>
        <strain>ATCC BAA-705 / NCIMB 13946 / BJ001</strain>
    </source>
</reference>
<accession>B1ZDV2</accession>
<proteinExistence type="inferred from homology"/>
<name>RL36_METPB</name>
<feature type="chain" id="PRO_1000101042" description="Large ribosomal subunit protein bL36">
    <location>
        <begin position="1"/>
        <end position="41"/>
    </location>
</feature>
<organism>
    <name type="scientific">Methylorubrum populi (strain ATCC BAA-705 / NCIMB 13946 / BJ001)</name>
    <name type="common">Methylobacterium populi</name>
    <dbReference type="NCBI Taxonomy" id="441620"/>
    <lineage>
        <taxon>Bacteria</taxon>
        <taxon>Pseudomonadati</taxon>
        <taxon>Pseudomonadota</taxon>
        <taxon>Alphaproteobacteria</taxon>
        <taxon>Hyphomicrobiales</taxon>
        <taxon>Methylobacteriaceae</taxon>
        <taxon>Methylorubrum</taxon>
    </lineage>
</organism>
<dbReference type="EMBL" id="CP001029">
    <property type="protein sequence ID" value="ACB81018.1"/>
    <property type="molecule type" value="Genomic_DNA"/>
</dbReference>
<dbReference type="SMR" id="B1ZDV2"/>
<dbReference type="STRING" id="441620.Mpop_2863"/>
<dbReference type="KEGG" id="mpo:Mpop_2863"/>
<dbReference type="eggNOG" id="COG0257">
    <property type="taxonomic scope" value="Bacteria"/>
</dbReference>
<dbReference type="HOGENOM" id="CLU_135723_3_2_5"/>
<dbReference type="OrthoDB" id="9801558at2"/>
<dbReference type="Proteomes" id="UP000007136">
    <property type="component" value="Chromosome"/>
</dbReference>
<dbReference type="GO" id="GO:1990904">
    <property type="term" value="C:ribonucleoprotein complex"/>
    <property type="evidence" value="ECO:0007669"/>
    <property type="project" value="UniProtKB-KW"/>
</dbReference>
<dbReference type="GO" id="GO:0005840">
    <property type="term" value="C:ribosome"/>
    <property type="evidence" value="ECO:0007669"/>
    <property type="project" value="UniProtKB-KW"/>
</dbReference>
<dbReference type="GO" id="GO:0003735">
    <property type="term" value="F:structural constituent of ribosome"/>
    <property type="evidence" value="ECO:0007669"/>
    <property type="project" value="InterPro"/>
</dbReference>
<dbReference type="GO" id="GO:0006412">
    <property type="term" value="P:translation"/>
    <property type="evidence" value="ECO:0007669"/>
    <property type="project" value="UniProtKB-UniRule"/>
</dbReference>
<dbReference type="HAMAP" id="MF_00251">
    <property type="entry name" value="Ribosomal_bL36"/>
    <property type="match status" value="1"/>
</dbReference>
<dbReference type="InterPro" id="IPR000473">
    <property type="entry name" value="Ribosomal_bL36"/>
</dbReference>
<dbReference type="InterPro" id="IPR035977">
    <property type="entry name" value="Ribosomal_bL36_sp"/>
</dbReference>
<dbReference type="InterPro" id="IPR047621">
    <property type="entry name" value="Ribosomal_L36_bact"/>
</dbReference>
<dbReference type="NCBIfam" id="NF002021">
    <property type="entry name" value="PRK00831.1"/>
    <property type="match status" value="1"/>
</dbReference>
<dbReference type="NCBIfam" id="TIGR01022">
    <property type="entry name" value="rpmJ_bact"/>
    <property type="match status" value="1"/>
</dbReference>
<dbReference type="PANTHER" id="PTHR47781">
    <property type="entry name" value="50S RIBOSOMAL PROTEIN L36 2"/>
    <property type="match status" value="1"/>
</dbReference>
<dbReference type="PANTHER" id="PTHR47781:SF1">
    <property type="entry name" value="LARGE RIBOSOMAL SUBUNIT PROTEIN BL36B"/>
    <property type="match status" value="1"/>
</dbReference>
<dbReference type="Pfam" id="PF00444">
    <property type="entry name" value="Ribosomal_L36"/>
    <property type="match status" value="1"/>
</dbReference>
<dbReference type="SUPFAM" id="SSF57840">
    <property type="entry name" value="Ribosomal protein L36"/>
    <property type="match status" value="1"/>
</dbReference>
<dbReference type="PROSITE" id="PS00828">
    <property type="entry name" value="RIBOSOMAL_L36"/>
    <property type="match status" value="1"/>
</dbReference>
<keyword id="KW-0687">Ribonucleoprotein</keyword>
<keyword id="KW-0689">Ribosomal protein</keyword>
<comment type="similarity">
    <text evidence="1">Belongs to the bacterial ribosomal protein bL36 family.</text>
</comment>